<evidence type="ECO:0000255" key="1">
    <source>
        <dbReference type="HAMAP-Rule" id="MF_01320"/>
    </source>
</evidence>
<evidence type="ECO:0000256" key="2">
    <source>
        <dbReference type="SAM" id="MobiDB-lite"/>
    </source>
</evidence>
<evidence type="ECO:0000305" key="3"/>
<organism>
    <name type="scientific">Saccharolobus islandicus (strain M.16.27)</name>
    <name type="common">Sulfolobus islandicus</name>
    <dbReference type="NCBI Taxonomy" id="427318"/>
    <lineage>
        <taxon>Archaea</taxon>
        <taxon>Thermoproteota</taxon>
        <taxon>Thermoprotei</taxon>
        <taxon>Sulfolobales</taxon>
        <taxon>Sulfolobaceae</taxon>
        <taxon>Saccharolobus</taxon>
    </lineage>
</organism>
<keyword id="KW-0687">Ribonucleoprotein</keyword>
<keyword id="KW-0689">Ribosomal protein</keyword>
<keyword id="KW-0694">RNA-binding</keyword>
<keyword id="KW-0699">rRNA-binding</keyword>
<feature type="chain" id="PRO_1000214460" description="Large ribosomal subunit protein uL2">
    <location>
        <begin position="1"/>
        <end position="238"/>
    </location>
</feature>
<feature type="region of interest" description="Disordered" evidence="2">
    <location>
        <begin position="200"/>
        <end position="238"/>
    </location>
</feature>
<feature type="compositionally biased region" description="Polar residues" evidence="2">
    <location>
        <begin position="206"/>
        <end position="216"/>
    </location>
</feature>
<feature type="compositionally biased region" description="Basic residues" evidence="2">
    <location>
        <begin position="223"/>
        <end position="238"/>
    </location>
</feature>
<comment type="function">
    <text evidence="1">One of the primary rRNA binding proteins. Required for association of the 30S and 50S subunits to form the 70S ribosome, for tRNA binding and peptide bond formation. It has been suggested to have peptidyltransferase activity; this is somewhat controversial. Makes several contacts with the 16S rRNA in the 70S ribosome.</text>
</comment>
<comment type="subunit">
    <text evidence="1">Part of the 50S ribosomal subunit. Forms a bridge to the 30S subunit in the 70S ribosome.</text>
</comment>
<comment type="similarity">
    <text evidence="1">Belongs to the universal ribosomal protein uL2 family.</text>
</comment>
<protein>
    <recommendedName>
        <fullName evidence="1">Large ribosomal subunit protein uL2</fullName>
    </recommendedName>
    <alternativeName>
        <fullName evidence="3">50S ribosomal protein L2</fullName>
    </alternativeName>
</protein>
<sequence length="238" mass="25234">MGKNLLQQRAGKGSPTFRSPSWLRIGKVRYPNIFGHLVGKVIDIVHNPGMNAPVAIIKLENGTKFLTQAIQGLVINQKIEFGKGSPIANGNVIEIGDAPEGTIVCNVEENFGDGGKYARSAGSYAVVVGKSGDKVLIKLPSDKIKAVSNKARATVGVVAGGGVVEKPLLKAGANYWKYKVKAKKWPIVRGVAMNVVDHPHGGGLHQSVSRPSTVSRNAPPGRKVGHIAARRTGRKEGK</sequence>
<accession>C3N5T0</accession>
<name>RL2_SACI3</name>
<reference key="1">
    <citation type="journal article" date="2009" name="Proc. Natl. Acad. Sci. U.S.A.">
        <title>Biogeography of the Sulfolobus islandicus pan-genome.</title>
        <authorList>
            <person name="Reno M.L."/>
            <person name="Held N.L."/>
            <person name="Fields C.J."/>
            <person name="Burke P.V."/>
            <person name="Whitaker R.J."/>
        </authorList>
    </citation>
    <scope>NUCLEOTIDE SEQUENCE [LARGE SCALE GENOMIC DNA]</scope>
    <source>
        <strain>M.16.27</strain>
    </source>
</reference>
<gene>
    <name evidence="1" type="primary">rpl2</name>
    <name type="ordered locus">M1627_1473</name>
</gene>
<dbReference type="EMBL" id="CP001401">
    <property type="protein sequence ID" value="ACP55355.1"/>
    <property type="molecule type" value="Genomic_DNA"/>
</dbReference>
<dbReference type="RefSeq" id="WP_012711421.1">
    <property type="nucleotide sequence ID" value="NC_012632.1"/>
</dbReference>
<dbReference type="SMR" id="C3N5T0"/>
<dbReference type="KEGG" id="sim:M1627_1473"/>
<dbReference type="HOGENOM" id="CLU_036235_0_1_2"/>
<dbReference type="Proteomes" id="UP000002307">
    <property type="component" value="Chromosome"/>
</dbReference>
<dbReference type="GO" id="GO:0022625">
    <property type="term" value="C:cytosolic large ribosomal subunit"/>
    <property type="evidence" value="ECO:0007669"/>
    <property type="project" value="TreeGrafter"/>
</dbReference>
<dbReference type="GO" id="GO:0019843">
    <property type="term" value="F:rRNA binding"/>
    <property type="evidence" value="ECO:0007669"/>
    <property type="project" value="UniProtKB-UniRule"/>
</dbReference>
<dbReference type="GO" id="GO:0003735">
    <property type="term" value="F:structural constituent of ribosome"/>
    <property type="evidence" value="ECO:0007669"/>
    <property type="project" value="InterPro"/>
</dbReference>
<dbReference type="GO" id="GO:0002181">
    <property type="term" value="P:cytoplasmic translation"/>
    <property type="evidence" value="ECO:0007669"/>
    <property type="project" value="TreeGrafter"/>
</dbReference>
<dbReference type="FunFam" id="2.30.30.30:FF:000001">
    <property type="entry name" value="50S ribosomal protein L2"/>
    <property type="match status" value="1"/>
</dbReference>
<dbReference type="FunFam" id="4.10.950.10:FF:000002">
    <property type="entry name" value="60S ribosomal protein L2"/>
    <property type="match status" value="1"/>
</dbReference>
<dbReference type="Gene3D" id="2.30.30.30">
    <property type="match status" value="1"/>
</dbReference>
<dbReference type="Gene3D" id="2.40.50.140">
    <property type="entry name" value="Nucleic acid-binding proteins"/>
    <property type="match status" value="1"/>
</dbReference>
<dbReference type="Gene3D" id="4.10.950.10">
    <property type="entry name" value="Ribosomal protein L2, domain 3"/>
    <property type="match status" value="1"/>
</dbReference>
<dbReference type="HAMAP" id="MF_01320_A">
    <property type="entry name" value="Ribosomal_uL2_A"/>
    <property type="match status" value="1"/>
</dbReference>
<dbReference type="InterPro" id="IPR012340">
    <property type="entry name" value="NA-bd_OB-fold"/>
</dbReference>
<dbReference type="InterPro" id="IPR014722">
    <property type="entry name" value="Rib_uL2_dom2"/>
</dbReference>
<dbReference type="InterPro" id="IPR002171">
    <property type="entry name" value="Ribosomal_uL2"/>
</dbReference>
<dbReference type="InterPro" id="IPR023672">
    <property type="entry name" value="Ribosomal_uL2_arc_euk"/>
</dbReference>
<dbReference type="InterPro" id="IPR022669">
    <property type="entry name" value="Ribosomal_uL2_C"/>
</dbReference>
<dbReference type="InterPro" id="IPR014726">
    <property type="entry name" value="Ribosomal_uL2_dom3"/>
</dbReference>
<dbReference type="InterPro" id="IPR022666">
    <property type="entry name" value="Ribosomal_uL2_RNA-bd_dom"/>
</dbReference>
<dbReference type="InterPro" id="IPR008991">
    <property type="entry name" value="Translation_prot_SH3-like_sf"/>
</dbReference>
<dbReference type="NCBIfam" id="NF007180">
    <property type="entry name" value="PRK09612.1"/>
    <property type="match status" value="1"/>
</dbReference>
<dbReference type="PANTHER" id="PTHR13691:SF16">
    <property type="entry name" value="LARGE RIBOSOMAL SUBUNIT PROTEIN UL2"/>
    <property type="match status" value="1"/>
</dbReference>
<dbReference type="PANTHER" id="PTHR13691">
    <property type="entry name" value="RIBOSOMAL PROTEIN L2"/>
    <property type="match status" value="1"/>
</dbReference>
<dbReference type="Pfam" id="PF00181">
    <property type="entry name" value="Ribosomal_L2"/>
    <property type="match status" value="1"/>
</dbReference>
<dbReference type="Pfam" id="PF03947">
    <property type="entry name" value="Ribosomal_L2_C"/>
    <property type="match status" value="1"/>
</dbReference>
<dbReference type="PIRSF" id="PIRSF002158">
    <property type="entry name" value="Ribosomal_L2"/>
    <property type="match status" value="1"/>
</dbReference>
<dbReference type="SMART" id="SM01383">
    <property type="entry name" value="Ribosomal_L2"/>
    <property type="match status" value="1"/>
</dbReference>
<dbReference type="SMART" id="SM01382">
    <property type="entry name" value="Ribosomal_L2_C"/>
    <property type="match status" value="1"/>
</dbReference>
<dbReference type="SUPFAM" id="SSF50249">
    <property type="entry name" value="Nucleic acid-binding proteins"/>
    <property type="match status" value="1"/>
</dbReference>
<dbReference type="SUPFAM" id="SSF50104">
    <property type="entry name" value="Translation proteins SH3-like domain"/>
    <property type="match status" value="1"/>
</dbReference>
<proteinExistence type="inferred from homology"/>